<proteinExistence type="inferred from homology"/>
<dbReference type="EMBL" id="FM211187">
    <property type="protein sequence ID" value="CAR69128.1"/>
    <property type="molecule type" value="Genomic_DNA"/>
</dbReference>
<dbReference type="RefSeq" id="WP_000782680.1">
    <property type="nucleotide sequence ID" value="NC_011900.1"/>
</dbReference>
<dbReference type="SMR" id="B8ZKL1"/>
<dbReference type="KEGG" id="sne:SPN23F13280"/>
<dbReference type="HOGENOM" id="CLU_071496_1_0_9"/>
<dbReference type="GO" id="GO:0030674">
    <property type="term" value="F:protein-macromolecule adaptor activity"/>
    <property type="evidence" value="ECO:0007669"/>
    <property type="project" value="UniProtKB-UniRule"/>
</dbReference>
<dbReference type="Gene3D" id="3.30.70.1950">
    <property type="match status" value="1"/>
</dbReference>
<dbReference type="HAMAP" id="MF_01124">
    <property type="entry name" value="MecA"/>
    <property type="match status" value="1"/>
</dbReference>
<dbReference type="InterPro" id="IPR038471">
    <property type="entry name" value="MecA_C_sf"/>
</dbReference>
<dbReference type="InterPro" id="IPR008681">
    <property type="entry name" value="Neg-reg_MecA"/>
</dbReference>
<dbReference type="NCBIfam" id="NF002643">
    <property type="entry name" value="PRK02315.1-4"/>
    <property type="match status" value="1"/>
</dbReference>
<dbReference type="PANTHER" id="PTHR39161">
    <property type="entry name" value="ADAPTER PROTEIN MECA"/>
    <property type="match status" value="1"/>
</dbReference>
<dbReference type="PANTHER" id="PTHR39161:SF1">
    <property type="entry name" value="ADAPTER PROTEIN MECA 1"/>
    <property type="match status" value="1"/>
</dbReference>
<dbReference type="Pfam" id="PF05389">
    <property type="entry name" value="MecA"/>
    <property type="match status" value="1"/>
</dbReference>
<dbReference type="PIRSF" id="PIRSF029008">
    <property type="entry name" value="MecA"/>
    <property type="match status" value="1"/>
</dbReference>
<reference key="1">
    <citation type="journal article" date="2009" name="J. Bacteriol.">
        <title>Role of conjugative elements in the evolution of the multidrug-resistant pandemic clone Streptococcus pneumoniae Spain23F ST81.</title>
        <authorList>
            <person name="Croucher N.J."/>
            <person name="Walker D."/>
            <person name="Romero P."/>
            <person name="Lennard N."/>
            <person name="Paterson G.K."/>
            <person name="Bason N.C."/>
            <person name="Mitchell A.M."/>
            <person name="Quail M.A."/>
            <person name="Andrew P.W."/>
            <person name="Parkhill J."/>
            <person name="Bentley S.D."/>
            <person name="Mitchell T.J."/>
        </authorList>
    </citation>
    <scope>NUCLEOTIDE SEQUENCE [LARGE SCALE GENOMIC DNA]</scope>
    <source>
        <strain>ATCC 700669 / Spain 23F-1</strain>
    </source>
</reference>
<comment type="function">
    <text evidence="1">Enables the recognition and targeting of unfolded and aggregated proteins to the ClpC protease or to other proteins involved in proteolysis.</text>
</comment>
<comment type="subunit">
    <text evidence="1">Homodimer.</text>
</comment>
<comment type="domain">
    <text>The N-terminal domain probably binds unfolded/aggregated proteins; the C-terminal domain interacts with ClpC.</text>
</comment>
<comment type="similarity">
    <text evidence="1">Belongs to the MecA family.</text>
</comment>
<organism>
    <name type="scientific">Streptococcus pneumoniae (strain ATCC 700669 / Spain 23F-1)</name>
    <dbReference type="NCBI Taxonomy" id="561276"/>
    <lineage>
        <taxon>Bacteria</taxon>
        <taxon>Bacillati</taxon>
        <taxon>Bacillota</taxon>
        <taxon>Bacilli</taxon>
        <taxon>Lactobacillales</taxon>
        <taxon>Streptococcaceae</taxon>
        <taxon>Streptococcus</taxon>
    </lineage>
</organism>
<gene>
    <name evidence="1" type="primary">mecA</name>
    <name type="ordered locus">SPN23F13280</name>
</gene>
<protein>
    <recommendedName>
        <fullName evidence="1">Adapter protein MecA</fullName>
    </recommendedName>
</protein>
<accession>B8ZKL1</accession>
<feature type="chain" id="PRO_1000164056" description="Adapter protein MecA">
    <location>
        <begin position="1"/>
        <end position="245"/>
    </location>
</feature>
<sequence length="245" mass="28409">MKMKQISDTTLKITMSLEDLMDRGMEIADFLVPQEKTEEFFYAILDELEMPDSFLDTGMLSFRVTPKPDKVDVFVTKSKIDQNLDFEDLSDLPDMEELAQMSPDEFIKTLEKSIADKTKDDIEAIQSLEQVEAKEEEQEQAEQEAESKKEPYIYYILSFAKLADLVVFAKTVTFEMETSELYKMNERYYLTILVDIENHPSPYPAWLLARMREFADDSDISRSVLQEYGQVLMSHDAVLNLQKIG</sequence>
<evidence type="ECO:0000255" key="1">
    <source>
        <dbReference type="HAMAP-Rule" id="MF_01124"/>
    </source>
</evidence>
<name>MECA_STRPJ</name>